<keyword id="KW-0378">Hydrolase</keyword>
<keyword id="KW-0479">Metal-binding</keyword>
<keyword id="KW-0665">Pyrimidine biosynthesis</keyword>
<keyword id="KW-0862">Zinc</keyword>
<evidence type="ECO:0000255" key="1">
    <source>
        <dbReference type="HAMAP-Rule" id="MF_00219"/>
    </source>
</evidence>
<reference key="1">
    <citation type="submission" date="2009-07" db="EMBL/GenBank/DDBJ databases">
        <title>Complete sequence of Pectobacterium carotovorum subsp. carotovorum PC1.</title>
        <authorList>
            <consortium name="US DOE Joint Genome Institute"/>
            <person name="Lucas S."/>
            <person name="Copeland A."/>
            <person name="Lapidus A."/>
            <person name="Glavina del Rio T."/>
            <person name="Tice H."/>
            <person name="Bruce D."/>
            <person name="Goodwin L."/>
            <person name="Pitluck S."/>
            <person name="Munk A.C."/>
            <person name="Brettin T."/>
            <person name="Detter J.C."/>
            <person name="Han C."/>
            <person name="Tapia R."/>
            <person name="Larimer F."/>
            <person name="Land M."/>
            <person name="Hauser L."/>
            <person name="Kyrpides N."/>
            <person name="Mikhailova N."/>
            <person name="Balakrishnan V."/>
            <person name="Glasner J."/>
            <person name="Perna N.T."/>
        </authorList>
    </citation>
    <scope>NUCLEOTIDE SEQUENCE [LARGE SCALE GENOMIC DNA]</scope>
    <source>
        <strain>PC1</strain>
    </source>
</reference>
<gene>
    <name evidence="1" type="primary">pyrC</name>
    <name type="ordered locus">PC1_2513</name>
</gene>
<organism>
    <name type="scientific">Pectobacterium carotovorum subsp. carotovorum (strain PC1)</name>
    <dbReference type="NCBI Taxonomy" id="561230"/>
    <lineage>
        <taxon>Bacteria</taxon>
        <taxon>Pseudomonadati</taxon>
        <taxon>Pseudomonadota</taxon>
        <taxon>Gammaproteobacteria</taxon>
        <taxon>Enterobacterales</taxon>
        <taxon>Pectobacteriaceae</taxon>
        <taxon>Pectobacterium</taxon>
    </lineage>
</organism>
<dbReference type="EC" id="3.5.2.3" evidence="1"/>
<dbReference type="EMBL" id="CP001657">
    <property type="protein sequence ID" value="ACT13544.1"/>
    <property type="molecule type" value="Genomic_DNA"/>
</dbReference>
<dbReference type="RefSeq" id="WP_015840720.1">
    <property type="nucleotide sequence ID" value="NC_012917.1"/>
</dbReference>
<dbReference type="SMR" id="C6DKU3"/>
<dbReference type="STRING" id="561230.PC1_2513"/>
<dbReference type="KEGG" id="pct:PC1_2513"/>
<dbReference type="eggNOG" id="COG0418">
    <property type="taxonomic scope" value="Bacteria"/>
</dbReference>
<dbReference type="HOGENOM" id="CLU_041558_1_0_6"/>
<dbReference type="OrthoDB" id="9808095at2"/>
<dbReference type="UniPathway" id="UPA00070">
    <property type="reaction ID" value="UER00117"/>
</dbReference>
<dbReference type="Proteomes" id="UP000002736">
    <property type="component" value="Chromosome"/>
</dbReference>
<dbReference type="GO" id="GO:0005829">
    <property type="term" value="C:cytosol"/>
    <property type="evidence" value="ECO:0007669"/>
    <property type="project" value="TreeGrafter"/>
</dbReference>
<dbReference type="GO" id="GO:0004151">
    <property type="term" value="F:dihydroorotase activity"/>
    <property type="evidence" value="ECO:0007669"/>
    <property type="project" value="UniProtKB-UniRule"/>
</dbReference>
<dbReference type="GO" id="GO:0008270">
    <property type="term" value="F:zinc ion binding"/>
    <property type="evidence" value="ECO:0007669"/>
    <property type="project" value="UniProtKB-UniRule"/>
</dbReference>
<dbReference type="GO" id="GO:0006207">
    <property type="term" value="P:'de novo' pyrimidine nucleobase biosynthetic process"/>
    <property type="evidence" value="ECO:0007669"/>
    <property type="project" value="TreeGrafter"/>
</dbReference>
<dbReference type="GO" id="GO:0044205">
    <property type="term" value="P:'de novo' UMP biosynthetic process"/>
    <property type="evidence" value="ECO:0007669"/>
    <property type="project" value="UniProtKB-UniRule"/>
</dbReference>
<dbReference type="CDD" id="cd01294">
    <property type="entry name" value="DHOase"/>
    <property type="match status" value="1"/>
</dbReference>
<dbReference type="FunFam" id="3.20.20.140:FF:000006">
    <property type="entry name" value="Dihydroorotase"/>
    <property type="match status" value="1"/>
</dbReference>
<dbReference type="Gene3D" id="3.20.20.140">
    <property type="entry name" value="Metal-dependent hydrolases"/>
    <property type="match status" value="1"/>
</dbReference>
<dbReference type="HAMAP" id="MF_00219">
    <property type="entry name" value="PyrC_classII"/>
    <property type="match status" value="1"/>
</dbReference>
<dbReference type="InterPro" id="IPR006680">
    <property type="entry name" value="Amidohydro-rel"/>
</dbReference>
<dbReference type="InterPro" id="IPR004721">
    <property type="entry name" value="DHOdimr"/>
</dbReference>
<dbReference type="InterPro" id="IPR002195">
    <property type="entry name" value="Dihydroorotase_CS"/>
</dbReference>
<dbReference type="InterPro" id="IPR032466">
    <property type="entry name" value="Metal_Hydrolase"/>
</dbReference>
<dbReference type="NCBIfam" id="TIGR00856">
    <property type="entry name" value="pyrC_dimer"/>
    <property type="match status" value="1"/>
</dbReference>
<dbReference type="PANTHER" id="PTHR43137">
    <property type="entry name" value="DIHYDROOROTASE"/>
    <property type="match status" value="1"/>
</dbReference>
<dbReference type="PANTHER" id="PTHR43137:SF1">
    <property type="entry name" value="DIHYDROOROTASE"/>
    <property type="match status" value="1"/>
</dbReference>
<dbReference type="Pfam" id="PF01979">
    <property type="entry name" value="Amidohydro_1"/>
    <property type="match status" value="1"/>
</dbReference>
<dbReference type="PIRSF" id="PIRSF001237">
    <property type="entry name" value="DHOdimr"/>
    <property type="match status" value="1"/>
</dbReference>
<dbReference type="SUPFAM" id="SSF51556">
    <property type="entry name" value="Metallo-dependent hydrolases"/>
    <property type="match status" value="1"/>
</dbReference>
<dbReference type="PROSITE" id="PS00483">
    <property type="entry name" value="DIHYDROOROTASE_2"/>
    <property type="match status" value="1"/>
</dbReference>
<feature type="chain" id="PRO_1000204247" description="Dihydroorotase">
    <location>
        <begin position="1"/>
        <end position="347"/>
    </location>
</feature>
<feature type="active site" evidence="1">
    <location>
        <position position="251"/>
    </location>
</feature>
<feature type="binding site" evidence="1">
    <location>
        <position position="17"/>
    </location>
    <ligand>
        <name>Zn(2+)</name>
        <dbReference type="ChEBI" id="CHEBI:29105"/>
        <label>1</label>
    </ligand>
</feature>
<feature type="binding site" evidence="1">
    <location>
        <begin position="19"/>
        <end position="21"/>
    </location>
    <ligand>
        <name>substrate</name>
    </ligand>
</feature>
<feature type="binding site" evidence="1">
    <location>
        <position position="19"/>
    </location>
    <ligand>
        <name>Zn(2+)</name>
        <dbReference type="ChEBI" id="CHEBI:29105"/>
        <label>1</label>
    </ligand>
</feature>
<feature type="binding site" evidence="1">
    <location>
        <position position="45"/>
    </location>
    <ligand>
        <name>substrate</name>
    </ligand>
</feature>
<feature type="binding site" description="via carbamate group" evidence="1">
    <location>
        <position position="103"/>
    </location>
    <ligand>
        <name>Zn(2+)</name>
        <dbReference type="ChEBI" id="CHEBI:29105"/>
        <label>1</label>
    </ligand>
</feature>
<feature type="binding site" description="via carbamate group" evidence="1">
    <location>
        <position position="103"/>
    </location>
    <ligand>
        <name>Zn(2+)</name>
        <dbReference type="ChEBI" id="CHEBI:29105"/>
        <label>2</label>
    </ligand>
</feature>
<feature type="binding site" evidence="1">
    <location>
        <position position="140"/>
    </location>
    <ligand>
        <name>substrate</name>
    </ligand>
</feature>
<feature type="binding site" evidence="1">
    <location>
        <position position="140"/>
    </location>
    <ligand>
        <name>Zn(2+)</name>
        <dbReference type="ChEBI" id="CHEBI:29105"/>
        <label>2</label>
    </ligand>
</feature>
<feature type="binding site" evidence="1">
    <location>
        <position position="178"/>
    </location>
    <ligand>
        <name>Zn(2+)</name>
        <dbReference type="ChEBI" id="CHEBI:29105"/>
        <label>2</label>
    </ligand>
</feature>
<feature type="binding site" evidence="1">
    <location>
        <position position="223"/>
    </location>
    <ligand>
        <name>substrate</name>
    </ligand>
</feature>
<feature type="binding site" evidence="1">
    <location>
        <position position="251"/>
    </location>
    <ligand>
        <name>Zn(2+)</name>
        <dbReference type="ChEBI" id="CHEBI:29105"/>
        <label>1</label>
    </ligand>
</feature>
<feature type="binding site" evidence="1">
    <location>
        <position position="255"/>
    </location>
    <ligand>
        <name>substrate</name>
    </ligand>
</feature>
<feature type="binding site" evidence="1">
    <location>
        <position position="267"/>
    </location>
    <ligand>
        <name>substrate</name>
    </ligand>
</feature>
<feature type="modified residue" description="N6-carboxylysine" evidence="1">
    <location>
        <position position="103"/>
    </location>
</feature>
<protein>
    <recommendedName>
        <fullName evidence="1">Dihydroorotase</fullName>
        <shortName evidence="1">DHOase</shortName>
        <ecNumber evidence="1">3.5.2.3</ecNumber>
    </recommendedName>
</protein>
<name>PYRC_PECCP</name>
<proteinExistence type="inferred from homology"/>
<sequence>MTAQPTILKIRRPDDWHIHLRDDRMLETVLPYTSRFFGRAIVMPNLTPPITTVASAIAYRQRILAAVPQGDDFHPLMTCYLTDALDANEIVSGFEQGVFTAAKLYPANATTNSSHGVTSVANISGILEKMQKIGMPLLIHGEVTDAAVDIFDREARFIETVLEPLRQQFPELKVVLEHITTKEAAQYVVEGNDYLAATITPQHLMFNRNHMLVGGVRPHLYCLPILKRNTHQQALREAVASGCERLFLGTDSAPHAKHRKESSCGCAGVFNAQAALSTYATVFEEMNALDKLEAFCSLNGPRFYGLPVNDSWIELYRETVTFPEEISLGDESLIPFLAGQSLNWSVR</sequence>
<accession>C6DKU3</accession>
<comment type="function">
    <text evidence="1">Catalyzes the reversible cyclization of carbamoyl aspartate to dihydroorotate.</text>
</comment>
<comment type="catalytic activity">
    <reaction evidence="1">
        <text>(S)-dihydroorotate + H2O = N-carbamoyl-L-aspartate + H(+)</text>
        <dbReference type="Rhea" id="RHEA:24296"/>
        <dbReference type="ChEBI" id="CHEBI:15377"/>
        <dbReference type="ChEBI" id="CHEBI:15378"/>
        <dbReference type="ChEBI" id="CHEBI:30864"/>
        <dbReference type="ChEBI" id="CHEBI:32814"/>
        <dbReference type="EC" id="3.5.2.3"/>
    </reaction>
</comment>
<comment type="cofactor">
    <cofactor evidence="1">
        <name>Zn(2+)</name>
        <dbReference type="ChEBI" id="CHEBI:29105"/>
    </cofactor>
    <text evidence="1">Binds 2 Zn(2+) ions per subunit.</text>
</comment>
<comment type="pathway">
    <text evidence="1">Pyrimidine metabolism; UMP biosynthesis via de novo pathway; (S)-dihydroorotate from bicarbonate: step 3/3.</text>
</comment>
<comment type="subunit">
    <text evidence="1">Homodimer.</text>
</comment>
<comment type="similarity">
    <text evidence="1">Belongs to the metallo-dependent hydrolases superfamily. DHOase family. Class II DHOase subfamily.</text>
</comment>